<accession>Q46Z41</accession>
<keyword id="KW-0007">Acetylation</keyword>
<keyword id="KW-0067">ATP-binding</keyword>
<keyword id="KW-0436">Ligase</keyword>
<keyword id="KW-0460">Magnesium</keyword>
<keyword id="KW-0479">Metal-binding</keyword>
<keyword id="KW-0547">Nucleotide-binding</keyword>
<gene>
    <name evidence="1" type="primary">acsA</name>
    <name type="ordered locus">Reut_A2229</name>
</gene>
<organism>
    <name type="scientific">Cupriavidus pinatubonensis (strain JMP 134 / LMG 1197)</name>
    <name type="common">Cupriavidus necator (strain JMP 134)</name>
    <dbReference type="NCBI Taxonomy" id="264198"/>
    <lineage>
        <taxon>Bacteria</taxon>
        <taxon>Pseudomonadati</taxon>
        <taxon>Pseudomonadota</taxon>
        <taxon>Betaproteobacteria</taxon>
        <taxon>Burkholderiales</taxon>
        <taxon>Burkholderiaceae</taxon>
        <taxon>Cupriavidus</taxon>
    </lineage>
</organism>
<reference key="1">
    <citation type="journal article" date="2010" name="PLoS ONE">
        <title>The complete multipartite genome sequence of Cupriavidus necator JMP134, a versatile pollutant degrader.</title>
        <authorList>
            <person name="Lykidis A."/>
            <person name="Perez-Pantoja D."/>
            <person name="Ledger T."/>
            <person name="Mavromatis K."/>
            <person name="Anderson I.J."/>
            <person name="Ivanova N.N."/>
            <person name="Hooper S.D."/>
            <person name="Lapidus A."/>
            <person name="Lucas S."/>
            <person name="Gonzalez B."/>
            <person name="Kyrpides N.C."/>
        </authorList>
    </citation>
    <scope>NUCLEOTIDE SEQUENCE [LARGE SCALE GENOMIC DNA]</scope>
    <source>
        <strain>JMP134 / LMG 1197</strain>
    </source>
</reference>
<dbReference type="EC" id="6.2.1.1" evidence="1"/>
<dbReference type="EMBL" id="CP000090">
    <property type="protein sequence ID" value="AAZ61592.1"/>
    <property type="molecule type" value="Genomic_DNA"/>
</dbReference>
<dbReference type="SMR" id="Q46Z41"/>
<dbReference type="STRING" id="264198.Reut_A2229"/>
<dbReference type="KEGG" id="reu:Reut_A2229"/>
<dbReference type="eggNOG" id="COG0365">
    <property type="taxonomic scope" value="Bacteria"/>
</dbReference>
<dbReference type="HOGENOM" id="CLU_000022_3_6_4"/>
<dbReference type="OrthoDB" id="9766486at2"/>
<dbReference type="GO" id="GO:0005829">
    <property type="term" value="C:cytosol"/>
    <property type="evidence" value="ECO:0007669"/>
    <property type="project" value="TreeGrafter"/>
</dbReference>
<dbReference type="GO" id="GO:0003987">
    <property type="term" value="F:acetate-CoA ligase activity"/>
    <property type="evidence" value="ECO:0007669"/>
    <property type="project" value="UniProtKB-UniRule"/>
</dbReference>
<dbReference type="GO" id="GO:0016208">
    <property type="term" value="F:AMP binding"/>
    <property type="evidence" value="ECO:0007669"/>
    <property type="project" value="InterPro"/>
</dbReference>
<dbReference type="GO" id="GO:0005524">
    <property type="term" value="F:ATP binding"/>
    <property type="evidence" value="ECO:0007669"/>
    <property type="project" value="UniProtKB-KW"/>
</dbReference>
<dbReference type="GO" id="GO:0046872">
    <property type="term" value="F:metal ion binding"/>
    <property type="evidence" value="ECO:0007669"/>
    <property type="project" value="UniProtKB-KW"/>
</dbReference>
<dbReference type="GO" id="GO:0019427">
    <property type="term" value="P:acetyl-CoA biosynthetic process from acetate"/>
    <property type="evidence" value="ECO:0007669"/>
    <property type="project" value="InterPro"/>
</dbReference>
<dbReference type="CDD" id="cd05966">
    <property type="entry name" value="ACS"/>
    <property type="match status" value="1"/>
</dbReference>
<dbReference type="FunFam" id="3.40.50.12780:FF:000001">
    <property type="entry name" value="Acetyl-coenzyme A synthetase"/>
    <property type="match status" value="1"/>
</dbReference>
<dbReference type="Gene3D" id="3.30.300.30">
    <property type="match status" value="1"/>
</dbReference>
<dbReference type="Gene3D" id="3.40.50.12780">
    <property type="entry name" value="N-terminal domain of ligase-like"/>
    <property type="match status" value="1"/>
</dbReference>
<dbReference type="HAMAP" id="MF_01123">
    <property type="entry name" value="Ac_CoA_synth"/>
    <property type="match status" value="1"/>
</dbReference>
<dbReference type="InterPro" id="IPR011904">
    <property type="entry name" value="Ac_CoA_lig"/>
</dbReference>
<dbReference type="InterPro" id="IPR032387">
    <property type="entry name" value="ACAS_N"/>
</dbReference>
<dbReference type="InterPro" id="IPR025110">
    <property type="entry name" value="AMP-bd_C"/>
</dbReference>
<dbReference type="InterPro" id="IPR045851">
    <property type="entry name" value="AMP-bd_C_sf"/>
</dbReference>
<dbReference type="InterPro" id="IPR020845">
    <property type="entry name" value="AMP-binding_CS"/>
</dbReference>
<dbReference type="InterPro" id="IPR000873">
    <property type="entry name" value="AMP-dep_synth/lig_dom"/>
</dbReference>
<dbReference type="InterPro" id="IPR042099">
    <property type="entry name" value="ANL_N_sf"/>
</dbReference>
<dbReference type="NCBIfam" id="TIGR02188">
    <property type="entry name" value="Ac_CoA_lig_AcsA"/>
    <property type="match status" value="1"/>
</dbReference>
<dbReference type="NCBIfam" id="NF001208">
    <property type="entry name" value="PRK00174.1"/>
    <property type="match status" value="1"/>
</dbReference>
<dbReference type="PANTHER" id="PTHR24095">
    <property type="entry name" value="ACETYL-COENZYME A SYNTHETASE"/>
    <property type="match status" value="1"/>
</dbReference>
<dbReference type="PANTHER" id="PTHR24095:SF14">
    <property type="entry name" value="ACETYL-COENZYME A SYNTHETASE 1"/>
    <property type="match status" value="1"/>
</dbReference>
<dbReference type="Pfam" id="PF16177">
    <property type="entry name" value="ACAS_N"/>
    <property type="match status" value="1"/>
</dbReference>
<dbReference type="Pfam" id="PF00501">
    <property type="entry name" value="AMP-binding"/>
    <property type="match status" value="1"/>
</dbReference>
<dbReference type="Pfam" id="PF13193">
    <property type="entry name" value="AMP-binding_C"/>
    <property type="match status" value="1"/>
</dbReference>
<dbReference type="SUPFAM" id="SSF56801">
    <property type="entry name" value="Acetyl-CoA synthetase-like"/>
    <property type="match status" value="1"/>
</dbReference>
<dbReference type="PROSITE" id="PS00455">
    <property type="entry name" value="AMP_BINDING"/>
    <property type="match status" value="1"/>
</dbReference>
<sequence length="660" mass="72488">MSAIESVMQEHRVFNPPESFVRQAAIPGMDAYRALCAEAERDYEGFWASRARDLLHWNKPFTKVLDESNAPFYKWFEDGELNASYNCLDRNLQNGNADKTAIVFEADDGTATRVSYRDLHAKVCRFANGLKALGIKKGDRVVIYMPMSVEGVVAMQACARLGATHSVVFGGFSAKSLQERLVDVGAVALITADEQMRGGKALPLKAIADDALALGGCEAVKNVIVYRRTGGKVNWVEGRDRWMEDVSAGQPDTCEAVPVSAEHPLFVLYTSGSTGKPKGVQHSTGGYLLWALMTMQWTFDIKPDDLFWCTADIGWVTGHTYIAYGPLAAGATQIIFEGVPTYPNAGRFWDMIARHKVSIFYTAPTAIRSLIKAAEADEKIHPKQYDLSSLRLLGTVGEPINPEAWMWYYKNIGNERCPIVDTFWQTETGGHMITPLPGATPLVPGSCTLPLPGIMAAIVDETGHDVPNGSGGILVVKRPWPAMIRTIWGDPERFKKSYFPEELGGKLYLAGDGSIRDKETGYFTIMGRIDDVLNVSGHRMGTMEIESALVANPIVAEAAVVGRPDDTTGEAICAFVVLKRARPSDAEAQQIATELRNWVAKEIGPIAKPKDIRFGDNLPKTRSGKIMRRLLRSLAKGEEITQDTSTLENPAILDQLKQAQ</sequence>
<proteinExistence type="inferred from homology"/>
<protein>
    <recommendedName>
        <fullName evidence="1">Acetyl-coenzyme A synthetase</fullName>
        <shortName evidence="1">AcCoA synthetase</shortName>
        <shortName evidence="1">Acs</shortName>
        <ecNumber evidence="1">6.2.1.1</ecNumber>
    </recommendedName>
    <alternativeName>
        <fullName evidence="1">Acetate--CoA ligase</fullName>
    </alternativeName>
    <alternativeName>
        <fullName evidence="1">Acyl-activating enzyme</fullName>
    </alternativeName>
</protein>
<evidence type="ECO:0000255" key="1">
    <source>
        <dbReference type="HAMAP-Rule" id="MF_01123"/>
    </source>
</evidence>
<feature type="chain" id="PRO_1000065308" description="Acetyl-coenzyme A synthetase">
    <location>
        <begin position="1"/>
        <end position="660"/>
    </location>
</feature>
<feature type="binding site" evidence="1">
    <location>
        <begin position="197"/>
        <end position="200"/>
    </location>
    <ligand>
        <name>CoA</name>
        <dbReference type="ChEBI" id="CHEBI:57287"/>
    </ligand>
</feature>
<feature type="binding site" evidence="1">
    <location>
        <position position="317"/>
    </location>
    <ligand>
        <name>CoA</name>
        <dbReference type="ChEBI" id="CHEBI:57287"/>
    </ligand>
</feature>
<feature type="binding site" evidence="1">
    <location>
        <begin position="397"/>
        <end position="399"/>
    </location>
    <ligand>
        <name>ATP</name>
        <dbReference type="ChEBI" id="CHEBI:30616"/>
    </ligand>
</feature>
<feature type="binding site" evidence="1">
    <location>
        <begin position="421"/>
        <end position="426"/>
    </location>
    <ligand>
        <name>ATP</name>
        <dbReference type="ChEBI" id="CHEBI:30616"/>
    </ligand>
</feature>
<feature type="binding site" evidence="1">
    <location>
        <position position="512"/>
    </location>
    <ligand>
        <name>ATP</name>
        <dbReference type="ChEBI" id="CHEBI:30616"/>
    </ligand>
</feature>
<feature type="binding site" evidence="1">
    <location>
        <position position="528"/>
    </location>
    <ligand>
        <name>ATP</name>
        <dbReference type="ChEBI" id="CHEBI:30616"/>
    </ligand>
</feature>
<feature type="binding site" evidence="1">
    <location>
        <position position="536"/>
    </location>
    <ligand>
        <name>CoA</name>
        <dbReference type="ChEBI" id="CHEBI:57287"/>
    </ligand>
</feature>
<feature type="binding site" evidence="1">
    <location>
        <position position="539"/>
    </location>
    <ligand>
        <name>ATP</name>
        <dbReference type="ChEBI" id="CHEBI:30616"/>
    </ligand>
</feature>
<feature type="binding site" evidence="1">
    <location>
        <position position="550"/>
    </location>
    <ligand>
        <name>Mg(2+)</name>
        <dbReference type="ChEBI" id="CHEBI:18420"/>
    </ligand>
</feature>
<feature type="binding site" evidence="1">
    <location>
        <position position="555"/>
    </location>
    <ligand>
        <name>Mg(2+)</name>
        <dbReference type="ChEBI" id="CHEBI:18420"/>
    </ligand>
</feature>
<feature type="modified residue" description="N6-acetyllysine" evidence="1">
    <location>
        <position position="625"/>
    </location>
</feature>
<comment type="function">
    <text evidence="1">Catalyzes the conversion of acetate into acetyl-CoA (AcCoA), an essential intermediate at the junction of anabolic and catabolic pathways. AcsA undergoes a two-step reaction. In the first half reaction, AcsA combines acetate with ATP to form acetyl-adenylate (AcAMP) intermediate. In the second half reaction, it can then transfer the acetyl group from AcAMP to the sulfhydryl group of CoA, forming the product AcCoA.</text>
</comment>
<comment type="catalytic activity">
    <reaction evidence="1">
        <text>acetate + ATP + CoA = acetyl-CoA + AMP + diphosphate</text>
        <dbReference type="Rhea" id="RHEA:23176"/>
        <dbReference type="ChEBI" id="CHEBI:30089"/>
        <dbReference type="ChEBI" id="CHEBI:30616"/>
        <dbReference type="ChEBI" id="CHEBI:33019"/>
        <dbReference type="ChEBI" id="CHEBI:57287"/>
        <dbReference type="ChEBI" id="CHEBI:57288"/>
        <dbReference type="ChEBI" id="CHEBI:456215"/>
        <dbReference type="EC" id="6.2.1.1"/>
    </reaction>
</comment>
<comment type="cofactor">
    <cofactor evidence="1">
        <name>Mg(2+)</name>
        <dbReference type="ChEBI" id="CHEBI:18420"/>
    </cofactor>
</comment>
<comment type="PTM">
    <text evidence="1">Acetylated. Deacetylation by the SIR2-homolog deacetylase activates the enzyme.</text>
</comment>
<comment type="similarity">
    <text evidence="1">Belongs to the ATP-dependent AMP-binding enzyme family.</text>
</comment>
<name>ACSA_CUPPJ</name>